<organism>
    <name type="scientific">Odobenus rosmarus divergens</name>
    <name type="common">Pacific walrus</name>
    <dbReference type="NCBI Taxonomy" id="9708"/>
    <lineage>
        <taxon>Eukaryota</taxon>
        <taxon>Metazoa</taxon>
        <taxon>Chordata</taxon>
        <taxon>Craniata</taxon>
        <taxon>Vertebrata</taxon>
        <taxon>Euteleostomi</taxon>
        <taxon>Mammalia</taxon>
        <taxon>Eutheria</taxon>
        <taxon>Laurasiatheria</taxon>
        <taxon>Carnivora</taxon>
        <taxon>Caniformia</taxon>
        <taxon>Pinnipedia</taxon>
        <taxon>Odobenidae</taxon>
        <taxon>Odobenus</taxon>
    </lineage>
</organism>
<feature type="signal peptide" evidence="2">
    <location>
        <begin position="1"/>
        <end position="18"/>
    </location>
</feature>
<feature type="chain" id="PRO_0000425355" description="Proapolipoprotein A-II">
    <location>
        <begin position="19"/>
        <end position="100"/>
    </location>
</feature>
<feature type="chain" id="PRO_0000424680" description="Apolipoprotein A-II" evidence="1">
    <location>
        <begin position="24"/>
        <end position="100"/>
    </location>
</feature>
<feature type="chain" id="PRO_0000424749" description="Truncated apolipoprotein A-II" evidence="1">
    <location>
        <begin position="24"/>
        <end position="99"/>
    </location>
</feature>
<proteinExistence type="evidence at transcript level"/>
<accession>P0DM94</accession>
<reference key="1">
    <citation type="submission" date="2012-11" db="EMBL/GenBank/DDBJ databases">
        <authorList>
            <person name="Foote A.D."/>
            <person name="Gilbert M.T.P."/>
            <person name="Liu Y."/>
            <person name="Lee S.L."/>
            <person name="Dugan-Rocha S."/>
            <person name="Jhangiani S."/>
            <person name="Bandaranaike D."/>
            <person name="Batterton M."/>
            <person name="Bellair M."/>
            <person name="Bess C."/>
            <person name="Blankenburg K."/>
            <person name="Chao H."/>
            <person name="Denson S."/>
            <person name="Dinh H."/>
            <person name="Elkadiri S."/>
            <person name="Fu Q."/>
            <person name="Hernandez B."/>
            <person name="Javaid M."/>
            <person name="Jayaseelan J.C."/>
            <person name="Lee S."/>
            <person name="Li M."/>
            <person name="Liu X."/>
            <person name="Matskevitch T."/>
            <person name="Munidasa M."/>
            <person name="Najjar R."/>
            <person name="Nguyen L."/>
            <person name="Ongeri F."/>
            <person name="Osuji N."/>
            <person name="Perales L."/>
            <person name="Pu L.-L."/>
            <person name="Puazo M."/>
            <person name="Qi S."/>
            <person name="Qu C."/>
            <person name="Quiroz J."/>
            <person name="Raj R."/>
            <person name="Shafer J."/>
            <person name="Shen H."/>
            <person name="Tabassum N."/>
            <person name="Tang L.-Y."/>
            <person name="Taylor A."/>
            <person name="Weissenberger G."/>
            <person name="Wu Y.-Q."/>
            <person name="Xin Y."/>
            <person name="Zhang Y."/>
            <person name="Zhu Y."/>
            <person name="Zou X."/>
            <person name="Muzny D."/>
            <person name="Worley K."/>
            <person name="Gibbs R."/>
        </authorList>
    </citation>
    <scope>NUCLEOTIDE SEQUENCE [LARGE SCALE GENOMIC DNA]</scope>
</reference>
<reference key="2">
    <citation type="unpublished observations" date="2013-10">
        <authorList>
            <person name="Puppione D.L."/>
        </authorList>
    </citation>
    <scope>IDENTIFICATION</scope>
</reference>
<gene>
    <name type="primary">APOA2</name>
</gene>
<dbReference type="EMBL" id="ANOP01032616">
    <property type="status" value="NOT_ANNOTATED_CDS"/>
    <property type="molecule type" value="Genomic_DNA"/>
</dbReference>
<dbReference type="RefSeq" id="XP_004407970.1">
    <property type="nucleotide sequence ID" value="XM_004407913.1"/>
</dbReference>
<dbReference type="SMR" id="P0DM94"/>
<dbReference type="FunCoup" id="P0DM94">
    <property type="interactions" value="17"/>
</dbReference>
<dbReference type="STRING" id="9708.P0DM94"/>
<dbReference type="GeneID" id="101368362"/>
<dbReference type="KEGG" id="oro:101368362"/>
<dbReference type="CTD" id="336"/>
<dbReference type="InParanoid" id="P0DM94"/>
<dbReference type="OrthoDB" id="11909at33554"/>
<dbReference type="Proteomes" id="UP000245340">
    <property type="component" value="Unplaced"/>
</dbReference>
<dbReference type="GO" id="GO:0034366">
    <property type="term" value="C:spherical high-density lipoprotein particle"/>
    <property type="evidence" value="ECO:0007669"/>
    <property type="project" value="TreeGrafter"/>
</dbReference>
<dbReference type="GO" id="GO:0120020">
    <property type="term" value="F:cholesterol transfer activity"/>
    <property type="evidence" value="ECO:0007669"/>
    <property type="project" value="TreeGrafter"/>
</dbReference>
<dbReference type="GO" id="GO:0008035">
    <property type="term" value="F:high-density lipoprotein particle binding"/>
    <property type="evidence" value="ECO:0007669"/>
    <property type="project" value="TreeGrafter"/>
</dbReference>
<dbReference type="GO" id="GO:0008289">
    <property type="term" value="F:lipid binding"/>
    <property type="evidence" value="ECO:0007669"/>
    <property type="project" value="InterPro"/>
</dbReference>
<dbReference type="GO" id="GO:0042632">
    <property type="term" value="P:cholesterol homeostasis"/>
    <property type="evidence" value="ECO:0007669"/>
    <property type="project" value="TreeGrafter"/>
</dbReference>
<dbReference type="GO" id="GO:0030301">
    <property type="term" value="P:cholesterol transport"/>
    <property type="evidence" value="ECO:0007669"/>
    <property type="project" value="TreeGrafter"/>
</dbReference>
<dbReference type="GO" id="GO:0042157">
    <property type="term" value="P:lipoprotein metabolic process"/>
    <property type="evidence" value="ECO:0007669"/>
    <property type="project" value="InterPro"/>
</dbReference>
<dbReference type="GO" id="GO:0050766">
    <property type="term" value="P:positive regulation of phagocytosis"/>
    <property type="evidence" value="ECO:0000250"/>
    <property type="project" value="UniProtKB"/>
</dbReference>
<dbReference type="GO" id="GO:0050821">
    <property type="term" value="P:protein stabilization"/>
    <property type="evidence" value="ECO:0000250"/>
    <property type="project" value="UniProtKB"/>
</dbReference>
<dbReference type="Gene3D" id="6.10.250.100">
    <property type="match status" value="1"/>
</dbReference>
<dbReference type="InterPro" id="IPR006801">
    <property type="entry name" value="ApoA-II"/>
</dbReference>
<dbReference type="InterPro" id="IPR036172">
    <property type="entry name" value="ApoA-II_sf"/>
</dbReference>
<dbReference type="PANTHER" id="PTHR11027">
    <property type="entry name" value="APOLIPOPROTEIN A-II"/>
    <property type="match status" value="1"/>
</dbReference>
<dbReference type="PANTHER" id="PTHR11027:SF0">
    <property type="entry name" value="APOLIPOPROTEIN A-II"/>
    <property type="match status" value="1"/>
</dbReference>
<dbReference type="Pfam" id="PF04711">
    <property type="entry name" value="ApoA-II"/>
    <property type="match status" value="1"/>
</dbReference>
<dbReference type="SUPFAM" id="SSF82936">
    <property type="entry name" value="Apolipoprotein A-II"/>
    <property type="match status" value="1"/>
</dbReference>
<keyword id="KW-0165">Cleavage on pair of basic residues</keyword>
<keyword id="KW-0345">HDL</keyword>
<keyword id="KW-0445">Lipid transport</keyword>
<keyword id="KW-1185">Reference proteome</keyword>
<keyword id="KW-0964">Secreted</keyword>
<keyword id="KW-0732">Signal</keyword>
<keyword id="KW-0813">Transport</keyword>
<protein>
    <recommendedName>
        <fullName>Apolipoprotein A-II</fullName>
        <shortName>Apo-AII</shortName>
        <shortName>ApoA-II</shortName>
    </recommendedName>
    <alternativeName>
        <fullName>Apolipoprotein A2</fullName>
    </alternativeName>
    <component>
        <recommendedName>
            <fullName>Proapolipoprotein A-II</fullName>
            <shortName>ProapoA-II</shortName>
        </recommendedName>
    </component>
    <component>
        <recommendedName>
            <fullName>Truncated apolipoprotein A-II</fullName>
        </recommendedName>
    </component>
</protein>
<comment type="function">
    <text>May stabilize HDL (high density lipoprotein) structure by its association with lipids, and affect the HDL metabolism.</text>
</comment>
<comment type="subunit">
    <text evidence="1">Monomer. Interacts with NAXE and NDRG1 (By similarity).</text>
</comment>
<comment type="subcellular location">
    <subcellularLocation>
        <location evidence="1">Secreted</location>
    </subcellularLocation>
</comment>
<comment type="tissue specificity">
    <text>Plasma.</text>
</comment>
<comment type="similarity">
    <text evidence="3">Belongs to the apolipoprotein A2 family.</text>
</comment>
<evidence type="ECO:0000250" key="1">
    <source>
        <dbReference type="UniProtKB" id="P02652"/>
    </source>
</evidence>
<evidence type="ECO:0000255" key="2"/>
<evidence type="ECO:0000305" key="3"/>
<name>APOA2_ODORO</name>
<sequence length="100" mass="11195">MKLLALAVLLLAVCSLEGAFVRRQAEEPNLQSLVSQYFQTMTDYGKDLVEKAKGPELQAQAKAYFEKTQEQLTPLVKKAGTDLINFLSNFMDLRTQPATQ</sequence>